<accession>Q70625</accession>
<protein>
    <recommendedName>
        <fullName evidence="1">Protein Vpu</fullName>
    </recommendedName>
    <alternativeName>
        <fullName evidence="1">U ORF protein</fullName>
    </alternativeName>
    <alternativeName>
        <fullName evidence="1">Viral protein U</fullName>
    </alternativeName>
</protein>
<organismHost>
    <name type="scientific">Homo sapiens</name>
    <name type="common">Human</name>
    <dbReference type="NCBI Taxonomy" id="9606"/>
</organismHost>
<dbReference type="EMBL" id="U12055">
    <property type="protein sequence ID" value="AAA76689.1"/>
    <property type="molecule type" value="Genomic_RNA"/>
</dbReference>
<dbReference type="PDB" id="1PI7">
    <property type="method" value="NMR"/>
    <property type="chains" value="A=1-28"/>
</dbReference>
<dbReference type="PDB" id="1PI8">
    <property type="method" value="NMR"/>
    <property type="chains" value="A=1-28"/>
</dbReference>
<dbReference type="PDB" id="1PJE">
    <property type="method" value="NMR"/>
    <property type="chains" value="A=1-28"/>
</dbReference>
<dbReference type="PDB" id="2GOF">
    <property type="method" value="NMR"/>
    <property type="chains" value="A=2-28"/>
</dbReference>
<dbReference type="PDB" id="2GOH">
    <property type="method" value="NMR"/>
    <property type="chains" value="A=2-28"/>
</dbReference>
<dbReference type="PDBsum" id="1PI7"/>
<dbReference type="PDBsum" id="1PI8"/>
<dbReference type="PDBsum" id="1PJE"/>
<dbReference type="PDBsum" id="2GOF"/>
<dbReference type="PDBsum" id="2GOH"/>
<dbReference type="SMR" id="Q70625"/>
<dbReference type="EvolutionaryTrace" id="Q70625"/>
<dbReference type="Proteomes" id="UP000165413">
    <property type="component" value="Genome"/>
</dbReference>
<dbReference type="GO" id="GO:0033644">
    <property type="term" value="C:host cell membrane"/>
    <property type="evidence" value="ECO:0007669"/>
    <property type="project" value="UniProtKB-SubCell"/>
</dbReference>
<dbReference type="GO" id="GO:0016020">
    <property type="term" value="C:membrane"/>
    <property type="evidence" value="ECO:0007669"/>
    <property type="project" value="UniProtKB-UniRule"/>
</dbReference>
<dbReference type="GO" id="GO:0042609">
    <property type="term" value="F:CD4 receptor binding"/>
    <property type="evidence" value="ECO:0007669"/>
    <property type="project" value="UniProtKB-UniRule"/>
</dbReference>
<dbReference type="GO" id="GO:0005261">
    <property type="term" value="F:monoatomic cation channel activity"/>
    <property type="evidence" value="ECO:0007669"/>
    <property type="project" value="UniProtKB-UniRule"/>
</dbReference>
<dbReference type="GO" id="GO:0032801">
    <property type="term" value="P:receptor catabolic process"/>
    <property type="evidence" value="ECO:0007669"/>
    <property type="project" value="UniProtKB-UniRule"/>
</dbReference>
<dbReference type="GO" id="GO:0052170">
    <property type="term" value="P:symbiont-mediated suppression of host innate immune response"/>
    <property type="evidence" value="ECO:0007669"/>
    <property type="project" value="UniProtKB-KW"/>
</dbReference>
<dbReference type="GO" id="GO:0039502">
    <property type="term" value="P:symbiont-mediated suppression of host type I interferon-mediated signaling pathway"/>
    <property type="evidence" value="ECO:0007669"/>
    <property type="project" value="UniProtKB-UniRule"/>
</dbReference>
<dbReference type="GO" id="GO:0039587">
    <property type="term" value="P:symbiont-mediated-mediated suppression of host tetherin activity"/>
    <property type="evidence" value="ECO:0007669"/>
    <property type="project" value="UniProtKB-UniRule"/>
</dbReference>
<dbReference type="GO" id="GO:0019076">
    <property type="term" value="P:viral release from host cell"/>
    <property type="evidence" value="ECO:0007669"/>
    <property type="project" value="UniProtKB-UniRule"/>
</dbReference>
<dbReference type="Gene3D" id="1.10.195.10">
    <property type="entry name" value="HIV-1 VPU cytoplasmic domain"/>
    <property type="match status" value="1"/>
</dbReference>
<dbReference type="HAMAP" id="MF_04082">
    <property type="entry name" value="HIV_VPU"/>
    <property type="match status" value="1"/>
</dbReference>
<dbReference type="InterPro" id="IPR008187">
    <property type="entry name" value="Vpu"/>
</dbReference>
<dbReference type="InterPro" id="IPR009032">
    <property type="entry name" value="Vpu_cyt_dom_sf"/>
</dbReference>
<dbReference type="Pfam" id="PF00558">
    <property type="entry name" value="Vpu"/>
    <property type="match status" value="1"/>
</dbReference>
<dbReference type="SUPFAM" id="SSF57647">
    <property type="entry name" value="HIV-1 VPU cytoplasmic domain"/>
    <property type="match status" value="1"/>
</dbReference>
<sequence>MQPIQIAIVALVVAIIIAIVVWSIVIIEYRKILRQRKIDRLIDRLIERAEDSGNESEGEISALAEMGVEMGHHAPWDVDDL</sequence>
<feature type="chain" id="PRO_0000085410" description="Protein Vpu">
    <location>
        <begin position="1"/>
        <end position="81"/>
    </location>
</feature>
<feature type="topological domain" description="Extracellular" evidence="1">
    <location>
        <begin position="1"/>
        <end position="6"/>
    </location>
</feature>
<feature type="transmembrane region" description="Helical" evidence="1">
    <location>
        <begin position="7"/>
        <end position="27"/>
    </location>
</feature>
<feature type="topological domain" description="Cytoplasmic" evidence="1">
    <location>
        <begin position="28"/>
        <end position="81"/>
    </location>
</feature>
<feature type="modified residue" description="Phosphoserine; by host CK2" evidence="1">
    <location>
        <position position="52"/>
    </location>
</feature>
<feature type="modified residue" description="Phosphoserine; by host CK2" evidence="1">
    <location>
        <position position="56"/>
    </location>
</feature>
<feature type="helix" evidence="9">
    <location>
        <begin position="8"/>
        <end position="24"/>
    </location>
</feature>
<keyword id="KW-0002">3D-structure</keyword>
<keyword id="KW-0014">AIDS</keyword>
<keyword id="KW-0053">Apoptosis</keyword>
<keyword id="KW-1043">Host membrane</keyword>
<keyword id="KW-0945">Host-virus interaction</keyword>
<keyword id="KW-1090">Inhibition of host innate immune response by virus</keyword>
<keyword id="KW-1084">Inhibition of host tetherin by virus</keyword>
<keyword id="KW-0407">Ion channel</keyword>
<keyword id="KW-0406">Ion transport</keyword>
<keyword id="KW-0472">Membrane</keyword>
<keyword id="KW-0597">Phosphoprotein</keyword>
<keyword id="KW-0812">Transmembrane</keyword>
<keyword id="KW-1133">Transmembrane helix</keyword>
<keyword id="KW-0813">Transport</keyword>
<keyword id="KW-0899">Viral immunoevasion</keyword>
<name>VPU_HV1LW</name>
<gene>
    <name evidence="1" type="primary">vpu</name>
</gene>
<evidence type="ECO:0000255" key="1">
    <source>
        <dbReference type="HAMAP-Rule" id="MF_04082"/>
    </source>
</evidence>
<evidence type="ECO:0000269" key="2">
    <source>
    </source>
</evidence>
<evidence type="ECO:0000269" key="3">
    <source>
    </source>
</evidence>
<evidence type="ECO:0007744" key="4">
    <source>
        <dbReference type="PDB" id="1PI7"/>
    </source>
</evidence>
<evidence type="ECO:0007744" key="5">
    <source>
        <dbReference type="PDB" id="1PI8"/>
    </source>
</evidence>
<evidence type="ECO:0007744" key="6">
    <source>
        <dbReference type="PDB" id="1PJE"/>
    </source>
</evidence>
<evidence type="ECO:0007744" key="7">
    <source>
        <dbReference type="PDB" id="2GOF"/>
    </source>
</evidence>
<evidence type="ECO:0007744" key="8">
    <source>
        <dbReference type="PDB" id="2GOH"/>
    </source>
</evidence>
<evidence type="ECO:0007829" key="9">
    <source>
        <dbReference type="PDB" id="1PI7"/>
    </source>
</evidence>
<comment type="function">
    <text evidence="1 2">Enhances virion budding by targeting host CD4 and Tetherin/BST2 to proteasome degradation. Degradation of CD4 prevents any unwanted premature interactions between viral Env and its host receptor CD4 in the endoplasmic reticulum. Degradation of antiretroviral protein Tetherin/BST2 is important for virion budding, as BST2 tethers new viral particles to the host cell membrane. Mechanistically, Vpu bridges either CD4 or BST2 to BTRC, a substrate recognition subunit of the Skp1/Cullin/F-box protein E3 ubiquitin ligase, induces their ubiquitination and subsequent proteasomal degradation. The alteration of the E3 ligase specificity by Vpu seems to promote the degradation of host IKBKB, leading to NF-kappa-B down-regulation and subsequent apoptosis. Acts as a viroporin that forms an oligomeric ion channel in membranes (PubMed:14529626). Modulates the host DNA repair mechanisms to promote degradation of nuclear viral cDNA in cells that are already productively infected in order to suppress immune sensing and proviral hyper-integration (superinfection). Manipulates PML-NBs and modulates SUMOylation of host BLM protein thereby enhancing its DNA-end processing activity toward viral unintegrated linear DNA. Also inhibits RAD52-mediated homologous repair of viral cDNA, preventing the generation of dead-end circular forms of single copies of the long terminal repeat and permitting sustained nucleolytic attack.</text>
</comment>
<comment type="activity regulation">
    <text evidence="1">Ion channel activity is inhibited by hexamethylene amiloride in vitro.</text>
</comment>
<comment type="subunit">
    <text evidence="1">Homopentamer. Interacts with host CD4 and BRTC; these interactions induce proteasomal degradation of CD4. Interacts with host BST2; this interaction leads to the degradation of host BST2. Interacts with host FBXW11. Interacts with host AP1M1; this interaction plays a role in the mistrafficking and subsequent degradation of host BST2. Interacts with host RANBP2; this interaction allows Vpu to down-regulate host BLM sumoylation.</text>
</comment>
<comment type="subcellular location">
    <subcellularLocation>
        <location evidence="1">Host membrane</location>
        <topology evidence="1 3">Single-pass type I membrane protein</topology>
    </subcellularLocation>
</comment>
<comment type="domain">
    <text evidence="1">The N-terminus and transmembrane domains are required for self-oligomerization and proper virion budding, whereas the cytoplasmic domain is required for CD4 degradation. The cytoplasmic domain is composed of 2 amphipathic alpha helix that form a U-shape.</text>
</comment>
<comment type="PTM">
    <text evidence="1">Phosphorylated by host CK2. This phosphorylation is necessary for interaction with human BTRC and degradation of CD4.</text>
</comment>
<comment type="miscellaneous">
    <text evidence="1">HIV-1 lineages are divided in three main groups, M (for Major), O (for Outlier), and N (for New, or Non-M, Non-O). The vast majority of strains found worldwide belong to the group M. Group O seems to be endemic to and largely confined to Cameroon and neighboring countries in West Central Africa, where these viruses represent a small minority of HIV-1 strains. The group N is represented by a limited number of isolates from Cameroonian persons. The group M is further subdivided in 9 clades or subtypes (A to D, F to H, J and K).</text>
</comment>
<comment type="similarity">
    <text evidence="1">Belongs to the HIV-1 VPU protein family.</text>
</comment>
<reference key="1">
    <citation type="journal article" date="1994" name="AIDS Res. Hum. Retroviruses">
        <title>Viral variability and serum antibody response in a laboratory worker infected with HIV type 1 (HTLV type IIIB).</title>
        <authorList>
            <person name="Reitz M.S. Jr."/>
            <person name="Hall L."/>
            <person name="Robert-Guroff M."/>
            <person name="Lautenberger J.A."/>
            <person name="Hahn B.M."/>
            <person name="Shaw G.M."/>
            <person name="Kong L.I."/>
            <person name="Weiss S.H."/>
            <person name="Waters D."/>
            <person name="Gallo R.C."/>
            <person name="Blattner W."/>
        </authorList>
    </citation>
    <scope>NUCLEOTIDE SEQUENCE [GENOMIC RNA]</scope>
</reference>
<reference evidence="4 5 6" key="2">
    <citation type="journal article" date="2003" name="J. Mol. Biol.">
        <title>Three-dimensional structure of the channel-forming trans-membrane domain of virus protein 'u' (Vpu) from HIV-1.</title>
        <authorList>
            <person name="Park S.H."/>
            <person name="Mrse A.A."/>
            <person name="Nevzorov A.A."/>
            <person name="Mesleh M.F."/>
            <person name="Oblatt-Montal M."/>
            <person name="Montal M."/>
            <person name="Opella S.J."/>
        </authorList>
    </citation>
    <scope>STRUCTURE BY NMR OF 1-28</scope>
    <scope>FUNCTION</scope>
</reference>
<reference evidence="7 8" key="3">
    <citation type="journal article" date="2006" name="Biophys. J.">
        <title>Three-dimensional structure of the transmembrane domain of Vpu from HIV-1 in aligned phospholipid bicelles.</title>
        <authorList>
            <person name="Park S.H."/>
            <person name="De Angelis A.A."/>
            <person name="Nevzorov A.A."/>
            <person name="Wu C.H."/>
            <person name="Opella S.J."/>
        </authorList>
    </citation>
    <scope>STRUCTURE BY NMR OF 2-28</scope>
    <scope>TOPOLOGY</scope>
</reference>
<organism>
    <name type="scientific">Human immunodeficiency virus type 1 group M subtype B (isolate LW123)</name>
    <name type="common">HIV-1</name>
    <dbReference type="NCBI Taxonomy" id="82834"/>
    <lineage>
        <taxon>Viruses</taxon>
        <taxon>Riboviria</taxon>
        <taxon>Pararnavirae</taxon>
        <taxon>Artverviricota</taxon>
        <taxon>Revtraviricetes</taxon>
        <taxon>Ortervirales</taxon>
        <taxon>Retroviridae</taxon>
        <taxon>Orthoretrovirinae</taxon>
        <taxon>Lentivirus</taxon>
        <taxon>Human immunodeficiency virus type 1</taxon>
    </lineage>
</organism>
<proteinExistence type="evidence at protein level"/>